<keyword id="KW-0010">Activator</keyword>
<keyword id="KW-0025">Alternative splicing</keyword>
<keyword id="KW-0238">DNA-binding</keyword>
<keyword id="KW-0479">Metal-binding</keyword>
<keyword id="KW-0539">Nucleus</keyword>
<keyword id="KW-1267">Proteomics identification</keyword>
<keyword id="KW-1185">Reference proteome</keyword>
<keyword id="KW-0677">Repeat</keyword>
<keyword id="KW-0678">Repressor</keyword>
<keyword id="KW-0804">Transcription</keyword>
<keyword id="KW-0805">Transcription regulation</keyword>
<keyword id="KW-0832">Ubl conjugation</keyword>
<keyword id="KW-0862">Zinc</keyword>
<keyword id="KW-0863">Zinc-finger</keyword>
<reference key="1">
    <citation type="journal article" date="2004" name="Nat. Genet.">
        <title>Complete sequencing and characterization of 21,243 full-length human cDNAs.</title>
        <authorList>
            <person name="Ota T."/>
            <person name="Suzuki Y."/>
            <person name="Nishikawa T."/>
            <person name="Otsuki T."/>
            <person name="Sugiyama T."/>
            <person name="Irie R."/>
            <person name="Wakamatsu A."/>
            <person name="Hayashi K."/>
            <person name="Sato H."/>
            <person name="Nagai K."/>
            <person name="Kimura K."/>
            <person name="Makita H."/>
            <person name="Sekine M."/>
            <person name="Obayashi M."/>
            <person name="Nishi T."/>
            <person name="Shibahara T."/>
            <person name="Tanaka T."/>
            <person name="Ishii S."/>
            <person name="Yamamoto J."/>
            <person name="Saito K."/>
            <person name="Kawai Y."/>
            <person name="Isono Y."/>
            <person name="Nakamura Y."/>
            <person name="Nagahari K."/>
            <person name="Murakami K."/>
            <person name="Yasuda T."/>
            <person name="Iwayanagi T."/>
            <person name="Wagatsuma M."/>
            <person name="Shiratori A."/>
            <person name="Sudo H."/>
            <person name="Hosoiri T."/>
            <person name="Kaku Y."/>
            <person name="Kodaira H."/>
            <person name="Kondo H."/>
            <person name="Sugawara M."/>
            <person name="Takahashi M."/>
            <person name="Kanda K."/>
            <person name="Yokoi T."/>
            <person name="Furuya T."/>
            <person name="Kikkawa E."/>
            <person name="Omura Y."/>
            <person name="Abe K."/>
            <person name="Kamihara K."/>
            <person name="Katsuta N."/>
            <person name="Sato K."/>
            <person name="Tanikawa M."/>
            <person name="Yamazaki M."/>
            <person name="Ninomiya K."/>
            <person name="Ishibashi T."/>
            <person name="Yamashita H."/>
            <person name="Murakawa K."/>
            <person name="Fujimori K."/>
            <person name="Tanai H."/>
            <person name="Kimata M."/>
            <person name="Watanabe M."/>
            <person name="Hiraoka S."/>
            <person name="Chiba Y."/>
            <person name="Ishida S."/>
            <person name="Ono Y."/>
            <person name="Takiguchi S."/>
            <person name="Watanabe S."/>
            <person name="Yosida M."/>
            <person name="Hotuta T."/>
            <person name="Kusano J."/>
            <person name="Kanehori K."/>
            <person name="Takahashi-Fujii A."/>
            <person name="Hara H."/>
            <person name="Tanase T.-O."/>
            <person name="Nomura Y."/>
            <person name="Togiya S."/>
            <person name="Komai F."/>
            <person name="Hara R."/>
            <person name="Takeuchi K."/>
            <person name="Arita M."/>
            <person name="Imose N."/>
            <person name="Musashino K."/>
            <person name="Yuuki H."/>
            <person name="Oshima A."/>
            <person name="Sasaki N."/>
            <person name="Aotsuka S."/>
            <person name="Yoshikawa Y."/>
            <person name="Matsunawa H."/>
            <person name="Ichihara T."/>
            <person name="Shiohata N."/>
            <person name="Sano S."/>
            <person name="Moriya S."/>
            <person name="Momiyama H."/>
            <person name="Satoh N."/>
            <person name="Takami S."/>
            <person name="Terashima Y."/>
            <person name="Suzuki O."/>
            <person name="Nakagawa S."/>
            <person name="Senoh A."/>
            <person name="Mizoguchi H."/>
            <person name="Goto Y."/>
            <person name="Shimizu F."/>
            <person name="Wakebe H."/>
            <person name="Hishigaki H."/>
            <person name="Watanabe T."/>
            <person name="Sugiyama A."/>
            <person name="Takemoto M."/>
            <person name="Kawakami B."/>
            <person name="Yamazaki M."/>
            <person name="Watanabe K."/>
            <person name="Kumagai A."/>
            <person name="Itakura S."/>
            <person name="Fukuzumi Y."/>
            <person name="Fujimori Y."/>
            <person name="Komiyama M."/>
            <person name="Tashiro H."/>
            <person name="Tanigami A."/>
            <person name="Fujiwara T."/>
            <person name="Ono T."/>
            <person name="Yamada K."/>
            <person name="Fujii Y."/>
            <person name="Ozaki K."/>
            <person name="Hirao M."/>
            <person name="Ohmori Y."/>
            <person name="Kawabata A."/>
            <person name="Hikiji T."/>
            <person name="Kobatake N."/>
            <person name="Inagaki H."/>
            <person name="Ikema Y."/>
            <person name="Okamoto S."/>
            <person name="Okitani R."/>
            <person name="Kawakami T."/>
            <person name="Noguchi S."/>
            <person name="Itoh T."/>
            <person name="Shigeta K."/>
            <person name="Senba T."/>
            <person name="Matsumura K."/>
            <person name="Nakajima Y."/>
            <person name="Mizuno T."/>
            <person name="Morinaga M."/>
            <person name="Sasaki M."/>
            <person name="Togashi T."/>
            <person name="Oyama M."/>
            <person name="Hata H."/>
            <person name="Watanabe M."/>
            <person name="Komatsu T."/>
            <person name="Mizushima-Sugano J."/>
            <person name="Satoh T."/>
            <person name="Shirai Y."/>
            <person name="Takahashi Y."/>
            <person name="Nakagawa K."/>
            <person name="Okumura K."/>
            <person name="Nagase T."/>
            <person name="Nomura N."/>
            <person name="Kikuchi H."/>
            <person name="Masuho Y."/>
            <person name="Yamashita R."/>
            <person name="Nakai K."/>
            <person name="Yada T."/>
            <person name="Nakamura Y."/>
            <person name="Ohara O."/>
            <person name="Isogai T."/>
            <person name="Sugano S."/>
        </authorList>
    </citation>
    <scope>NUCLEOTIDE SEQUENCE [LARGE SCALE MRNA] (ISOFORMS 1 AND 2)</scope>
    <source>
        <tissue>Synovium</tissue>
    </source>
</reference>
<reference key="2">
    <citation type="journal article" date="2006" name="Nature">
        <title>Human chromosome 11 DNA sequence and analysis including novel gene identification.</title>
        <authorList>
            <person name="Taylor T.D."/>
            <person name="Noguchi H."/>
            <person name="Totoki Y."/>
            <person name="Toyoda A."/>
            <person name="Kuroki Y."/>
            <person name="Dewar K."/>
            <person name="Lloyd C."/>
            <person name="Itoh T."/>
            <person name="Takeda T."/>
            <person name="Kim D.-W."/>
            <person name="She X."/>
            <person name="Barlow K.F."/>
            <person name="Bloom T."/>
            <person name="Bruford E."/>
            <person name="Chang J.L."/>
            <person name="Cuomo C.A."/>
            <person name="Eichler E."/>
            <person name="FitzGerald M.G."/>
            <person name="Jaffe D.B."/>
            <person name="LaButti K."/>
            <person name="Nicol R."/>
            <person name="Park H.-S."/>
            <person name="Seaman C."/>
            <person name="Sougnez C."/>
            <person name="Yang X."/>
            <person name="Zimmer A.R."/>
            <person name="Zody M.C."/>
            <person name="Birren B.W."/>
            <person name="Nusbaum C."/>
            <person name="Fujiyama A."/>
            <person name="Hattori M."/>
            <person name="Rogers J."/>
            <person name="Lander E.S."/>
            <person name="Sakaki Y."/>
        </authorList>
    </citation>
    <scope>NUCLEOTIDE SEQUENCE [LARGE SCALE GENOMIC DNA]</scope>
</reference>
<reference key="3">
    <citation type="submission" date="2005-07" db="EMBL/GenBank/DDBJ databases">
        <authorList>
            <person name="Mural R.J."/>
            <person name="Istrail S."/>
            <person name="Sutton G.G."/>
            <person name="Florea L."/>
            <person name="Halpern A.L."/>
            <person name="Mobarry C.M."/>
            <person name="Lippert R."/>
            <person name="Walenz B."/>
            <person name="Shatkay H."/>
            <person name="Dew I."/>
            <person name="Miller J.R."/>
            <person name="Flanigan M.J."/>
            <person name="Edwards N.J."/>
            <person name="Bolanos R."/>
            <person name="Fasulo D."/>
            <person name="Halldorsson B.V."/>
            <person name="Hannenhalli S."/>
            <person name="Turner R."/>
            <person name="Yooseph S."/>
            <person name="Lu F."/>
            <person name="Nusskern D.R."/>
            <person name="Shue B.C."/>
            <person name="Zheng X.H."/>
            <person name="Zhong F."/>
            <person name="Delcher A.L."/>
            <person name="Huson D.H."/>
            <person name="Kravitz S.A."/>
            <person name="Mouchard L."/>
            <person name="Reinert K."/>
            <person name="Remington K.A."/>
            <person name="Clark A.G."/>
            <person name="Waterman M.S."/>
            <person name="Eichler E.E."/>
            <person name="Adams M.D."/>
            <person name="Hunkapiller M.W."/>
            <person name="Myers E.W."/>
            <person name="Venter J.C."/>
        </authorList>
    </citation>
    <scope>NUCLEOTIDE SEQUENCE [LARGE SCALE GENOMIC DNA]</scope>
</reference>
<reference key="4">
    <citation type="journal article" date="2004" name="Genome Res.">
        <title>The status, quality, and expansion of the NIH full-length cDNA project: the Mammalian Gene Collection (MGC).</title>
        <authorList>
            <consortium name="The MGC Project Team"/>
        </authorList>
    </citation>
    <scope>NUCLEOTIDE SEQUENCE [LARGE SCALE MRNA] (ISOFORM 1)</scope>
    <scope>VARIANTS SER-4; CYS-78 AND VAL-493</scope>
    <source>
        <tissue>Eye</tissue>
        <tissue>Lung</tissue>
    </source>
</reference>
<reference key="5">
    <citation type="journal article" date="2007" name="BMC Genomics">
        <title>The full-ORF clone resource of the German cDNA consortium.</title>
        <authorList>
            <person name="Bechtel S."/>
            <person name="Rosenfelder H."/>
            <person name="Duda A."/>
            <person name="Schmidt C.P."/>
            <person name="Ernst U."/>
            <person name="Wellenreuther R."/>
            <person name="Mehrle A."/>
            <person name="Schuster C."/>
            <person name="Bahr A."/>
            <person name="Bloecker H."/>
            <person name="Heubner D."/>
            <person name="Hoerlein A."/>
            <person name="Michel G."/>
            <person name="Wedler H."/>
            <person name="Koehrer K."/>
            <person name="Ottenwaelder B."/>
            <person name="Poustka A."/>
            <person name="Wiemann S."/>
            <person name="Schupp I."/>
        </authorList>
    </citation>
    <scope>NUCLEOTIDE SEQUENCE [LARGE SCALE MRNA] OF 356-517 (ISOFORM 1)</scope>
    <source>
        <tissue>Testis</tissue>
    </source>
</reference>
<reference key="6">
    <citation type="journal article" date="2001" name="J. Biol. Chem.">
        <title>Involvement of a novel zinc finger protein, MIZF, in transcriptional repression by interacting with a methyl-CpG-binding protein, MBD2.</title>
        <authorList>
            <person name="Sekimata M."/>
            <person name="Takahashi A."/>
            <person name="Murakami-Sekimata A."/>
            <person name="Homma Y."/>
        </authorList>
    </citation>
    <scope>FUNCTION</scope>
    <scope>SUBCELLULAR LOCATION</scope>
    <scope>TISSUE SPECIFICITY</scope>
    <scope>INTERACTION WITH MBD2</scope>
</reference>
<reference key="7">
    <citation type="journal article" date="2003" name="Mol. Cell. Biol.">
        <title>Identification of HiNF-P, a key activator of cell cycle-controlled histone H4 genes at the onset of S phase.</title>
        <authorList>
            <person name="Mitra P."/>
            <person name="Xie R.-L."/>
            <person name="Medina R."/>
            <person name="Hovhannisyan H."/>
            <person name="Zaidi S.K."/>
            <person name="Wei Y."/>
            <person name="Harper J.W."/>
            <person name="Stein J.L."/>
            <person name="van Wijnen A.J."/>
            <person name="Stein G.S."/>
        </authorList>
    </citation>
    <scope>FUNCTION</scope>
    <scope>IDENTIFICATION BY MASS SPECTROMETRY</scope>
    <scope>SUBCELLULAR LOCATION</scope>
</reference>
<reference key="8">
    <citation type="journal article" date="2004" name="Nucleic Acids Res.">
        <title>Sequence-specific transcriptional repression by an MBD2-interacting zinc finger protein MIZF.</title>
        <authorList>
            <person name="Sekimata M."/>
            <person name="Homma Y."/>
        </authorList>
    </citation>
    <scope>FUNCTION</scope>
</reference>
<reference key="9">
    <citation type="journal article" date="2005" name="Mol. Cell. Biol.">
        <title>HiNF-P directly links the cyclin E/CDK2/p220NPAT pathway to histone H4 gene regulation at the G1/S phase cell cycle transition.</title>
        <authorList>
            <person name="Miele A."/>
            <person name="Braastad C.D."/>
            <person name="Holmes W.F."/>
            <person name="Mitra P."/>
            <person name="Medina R."/>
            <person name="Xie R.-L."/>
            <person name="Zaidi S.K."/>
            <person name="Ye X."/>
            <person name="Wei Y."/>
            <person name="Harper J.W."/>
            <person name="van Wijnen A.J."/>
            <person name="Stein J.L."/>
            <person name="Stein G.S."/>
        </authorList>
    </citation>
    <scope>FUNCTION</scope>
    <scope>INTERACTION WITH NPAT</scope>
    <scope>SUBCELLULAR LOCATION</scope>
</reference>
<reference key="10">
    <citation type="journal article" date="2006" name="Biochemistry">
        <title>The histone gene transcription factor HiNF-P stabilizes its cell cycle regulatory co-activator p220NPAT.</title>
        <authorList>
            <person name="Medina R."/>
            <person name="van Wijnen A.J."/>
            <person name="Stein G.S."/>
            <person name="Stein J.L."/>
        </authorList>
    </citation>
    <scope>UBIQUITINATION</scope>
</reference>
<reference key="11">
    <citation type="journal article" date="2007" name="Cancer Res.">
        <title>The HiNF-P/p220NPAT cell cycle signaling pathway controls nonhistone target genes.</title>
        <authorList>
            <person name="Medina R."/>
            <person name="van der Deen M."/>
            <person name="Miele-Chamberland A."/>
            <person name="Xie R.-L."/>
            <person name="van Wijnen A.J."/>
            <person name="Stein J.L."/>
            <person name="Stein G.S."/>
        </authorList>
    </citation>
    <scope>FUNCTION</scope>
</reference>
<reference key="12">
    <citation type="journal article" date="2007" name="J. Cell. Biochem.">
        <title>HiNF-P is a bifunctional regulator of cell cycle controlled histone H4 gene transcription.</title>
        <authorList>
            <person name="Mitra P."/>
            <person name="Xie R.-L."/>
            <person name="Harper J.W."/>
            <person name="Stein J.L."/>
            <person name="Stein G.S."/>
            <person name="van Wijnen A.J."/>
        </authorList>
    </citation>
    <scope>FUNCTION</scope>
</reference>
<reference key="13">
    <citation type="journal article" date="2008" name="Biochemistry">
        <title>The histone gene cell cycle regulator HiNF-P is a unique zinc finger transcription factor with a novel conserved auxiliary DNA-binding motif.</title>
        <authorList>
            <person name="Medina R."/>
            <person name="Buck T."/>
            <person name="Zaidi S.K."/>
            <person name="Miele-Chamberland A."/>
            <person name="Lian J.B."/>
            <person name="Stein J.L."/>
            <person name="van Wijnen A.J."/>
            <person name="Stein G.S."/>
        </authorList>
    </citation>
    <scope>FUNCTION</scope>
    <scope>SUBCELLULAR LOCATION</scope>
    <scope>REGION</scope>
    <scope>MUTAGENESIS OF TYR-381</scope>
</reference>
<feature type="chain" id="PRO_0000047218" description="Histone H4 transcription factor">
    <location>
        <begin position="1"/>
        <end position="517"/>
    </location>
</feature>
<feature type="zinc finger region" description="C2H2-type 1" evidence="1">
    <location>
        <begin position="15"/>
        <end position="39"/>
    </location>
</feature>
<feature type="zinc finger region" description="C2H2-type 2" evidence="1">
    <location>
        <begin position="129"/>
        <end position="153"/>
    </location>
</feature>
<feature type="zinc finger region" description="C2H2-type 3" evidence="1">
    <location>
        <begin position="169"/>
        <end position="193"/>
    </location>
</feature>
<feature type="zinc finger region" description="C2H2-type 4; degenerate" evidence="1">
    <location>
        <begin position="199"/>
        <end position="221"/>
    </location>
</feature>
<feature type="zinc finger region" description="C2H2-type 5" evidence="1">
    <location>
        <begin position="229"/>
        <end position="251"/>
    </location>
</feature>
<feature type="zinc finger region" description="C2H2-type 6" evidence="1">
    <location>
        <begin position="255"/>
        <end position="278"/>
    </location>
</feature>
<feature type="zinc finger region" description="C2H2-type 7" evidence="1">
    <location>
        <begin position="284"/>
        <end position="306"/>
    </location>
</feature>
<feature type="zinc finger region" description="C2H2-type 8" evidence="1">
    <location>
        <begin position="312"/>
        <end position="337"/>
    </location>
</feature>
<feature type="zinc finger region" description="C2H2-type 9" evidence="1">
    <location>
        <begin position="345"/>
        <end position="368"/>
    </location>
</feature>
<feature type="region of interest" description="Interaction with NPAT" evidence="7">
    <location>
        <begin position="373"/>
        <end position="517"/>
    </location>
</feature>
<feature type="region of interest" description="Required for activation of histone H4 transcription and contributes to DNA-binding">
    <location>
        <begin position="374"/>
        <end position="407"/>
    </location>
</feature>
<feature type="region of interest" description="Disordered" evidence="2">
    <location>
        <begin position="431"/>
        <end position="460"/>
    </location>
</feature>
<feature type="compositionally biased region" description="Polar residues" evidence="2">
    <location>
        <begin position="451"/>
        <end position="460"/>
    </location>
</feature>
<feature type="splice variant" id="VSP_044719" description="In isoform 2." evidence="12">
    <original>YKEHEDGYMRLQLVRYESVELTQQLLRQPQEGSGLGTSL</original>
    <variation>LGHFCIPLPGFAALYAPTSPGTRNMKMAICGCSWFATRV</variation>
    <location>
        <begin position="381"/>
        <end position="419"/>
    </location>
</feature>
<feature type="splice variant" id="VSP_044720" description="In isoform 2." evidence="12">
    <location>
        <begin position="420"/>
        <end position="517"/>
    </location>
</feature>
<feature type="sequence variant" id="VAR_026547" description="In dbSNP:rs17850972." evidence="6">
    <original>P</original>
    <variation>S</variation>
    <location>
        <position position="4"/>
    </location>
</feature>
<feature type="sequence variant" id="VAR_026548" description="In dbSNP:rs17850974." evidence="6">
    <original>S</original>
    <variation>C</variation>
    <location>
        <position position="78"/>
    </location>
</feature>
<feature type="sequence variant" id="VAR_038793" description="In dbSNP:rs34118252.">
    <original>K</original>
    <variation>R</variation>
    <location>
        <position position="352"/>
    </location>
</feature>
<feature type="sequence variant" id="VAR_019424" description="In dbSNP:rs100803." evidence="6">
    <original>A</original>
    <variation>V</variation>
    <location>
        <position position="493"/>
    </location>
</feature>
<feature type="mutagenesis site" description="Abolishes DNA-Binding." evidence="11">
    <original>Y</original>
    <variation>A</variation>
    <location>
        <position position="381"/>
    </location>
</feature>
<feature type="sequence conflict" description="In Ref. 1; BAG62976." evidence="13" ref="1">
    <original>E</original>
    <variation>G</variation>
    <location>
        <position position="62"/>
    </location>
</feature>
<dbReference type="EMBL" id="AK056362">
    <property type="protein sequence ID" value="BAG51688.1"/>
    <property type="molecule type" value="mRNA"/>
</dbReference>
<dbReference type="EMBL" id="AK301452">
    <property type="protein sequence ID" value="BAG62976.1"/>
    <property type="molecule type" value="mRNA"/>
</dbReference>
<dbReference type="EMBL" id="AP002956">
    <property type="status" value="NOT_ANNOTATED_CDS"/>
    <property type="molecule type" value="Genomic_DNA"/>
</dbReference>
<dbReference type="EMBL" id="AP003391">
    <property type="status" value="NOT_ANNOTATED_CDS"/>
    <property type="molecule type" value="Genomic_DNA"/>
</dbReference>
<dbReference type="EMBL" id="CH471065">
    <property type="protein sequence ID" value="EAW67461.1"/>
    <property type="molecule type" value="Genomic_DNA"/>
</dbReference>
<dbReference type="EMBL" id="BC001073">
    <property type="protein sequence ID" value="AAH01073.1"/>
    <property type="molecule type" value="mRNA"/>
</dbReference>
<dbReference type="EMBL" id="BC001945">
    <property type="protein sequence ID" value="AAH01945.1"/>
    <property type="molecule type" value="mRNA"/>
</dbReference>
<dbReference type="EMBL" id="BC012856">
    <property type="protein sequence ID" value="AAH12856.1"/>
    <property type="molecule type" value="mRNA"/>
</dbReference>
<dbReference type="EMBL" id="BC017234">
    <property type="protein sequence ID" value="AAH17234.1"/>
    <property type="molecule type" value="mRNA"/>
</dbReference>
<dbReference type="EMBL" id="AL080201">
    <property type="protein sequence ID" value="CAB45773.1"/>
    <property type="molecule type" value="mRNA"/>
</dbReference>
<dbReference type="CCDS" id="CCDS58188.1">
    <molecule id="Q9BQA5-2"/>
</dbReference>
<dbReference type="CCDS" id="CCDS8414.1">
    <molecule id="Q9BQA5-1"/>
</dbReference>
<dbReference type="PIR" id="T12509">
    <property type="entry name" value="T12509"/>
</dbReference>
<dbReference type="RefSeq" id="NP_001230188.1">
    <molecule id="Q9BQA5-2"/>
    <property type="nucleotide sequence ID" value="NM_001243259.2"/>
</dbReference>
<dbReference type="RefSeq" id="NP_001338887.1">
    <molecule id="Q9BQA5-1"/>
    <property type="nucleotide sequence ID" value="NM_001351958.2"/>
</dbReference>
<dbReference type="RefSeq" id="NP_001338888.1">
    <molecule id="Q9BQA5-1"/>
    <property type="nucleotide sequence ID" value="NM_001351959.2"/>
</dbReference>
<dbReference type="RefSeq" id="NP_001338889.1">
    <molecule id="Q9BQA5-1"/>
    <property type="nucleotide sequence ID" value="NM_001351960.2"/>
</dbReference>
<dbReference type="RefSeq" id="NP_056332.2">
    <molecule id="Q9BQA5-1"/>
    <property type="nucleotide sequence ID" value="NM_015517.4"/>
</dbReference>
<dbReference type="RefSeq" id="NP_945322.1">
    <molecule id="Q9BQA5-1"/>
    <property type="nucleotide sequence ID" value="NM_198971.3"/>
</dbReference>
<dbReference type="RefSeq" id="XP_011541047.1">
    <property type="nucleotide sequence ID" value="XM_011542745.2"/>
</dbReference>
<dbReference type="SMR" id="Q9BQA5"/>
<dbReference type="BioGRID" id="117469">
    <property type="interactions" value="42"/>
</dbReference>
<dbReference type="CORUM" id="Q9BQA5"/>
<dbReference type="FunCoup" id="Q9BQA5">
    <property type="interactions" value="3288"/>
</dbReference>
<dbReference type="IntAct" id="Q9BQA5">
    <property type="interactions" value="7"/>
</dbReference>
<dbReference type="MINT" id="Q9BQA5"/>
<dbReference type="STRING" id="9606.ENSP00000318085"/>
<dbReference type="iPTMnet" id="Q9BQA5"/>
<dbReference type="PhosphoSitePlus" id="Q9BQA5"/>
<dbReference type="BioMuta" id="HINFP"/>
<dbReference type="DMDM" id="322510032"/>
<dbReference type="jPOST" id="Q9BQA5"/>
<dbReference type="MassIVE" id="Q9BQA5"/>
<dbReference type="PaxDb" id="9606-ENSP00000318085"/>
<dbReference type="PeptideAtlas" id="Q9BQA5"/>
<dbReference type="ProteomicsDB" id="23003"/>
<dbReference type="ProteomicsDB" id="78648">
    <molecule id="Q9BQA5-1"/>
</dbReference>
<dbReference type="Antibodypedia" id="32617">
    <property type="antibodies" value="185 antibodies from 23 providers"/>
</dbReference>
<dbReference type="DNASU" id="25988"/>
<dbReference type="Ensembl" id="ENST00000350777.7">
    <molecule id="Q9BQA5-1"/>
    <property type="protein sequence ID" value="ENSP00000318085.3"/>
    <property type="gene ID" value="ENSG00000172273.13"/>
</dbReference>
<dbReference type="Ensembl" id="ENST00000527410.3">
    <molecule id="Q9BQA5-2"/>
    <property type="protein sequence ID" value="ENSP00000436815.1"/>
    <property type="gene ID" value="ENSG00000172273.13"/>
</dbReference>
<dbReference type="GeneID" id="25988"/>
<dbReference type="KEGG" id="hsa:25988"/>
<dbReference type="MANE-Select" id="ENST00000350777.7">
    <property type="protein sequence ID" value="ENSP00000318085.3"/>
    <property type="RefSeq nucleotide sequence ID" value="NM_198971.3"/>
    <property type="RefSeq protein sequence ID" value="NP_945322.1"/>
</dbReference>
<dbReference type="UCSC" id="uc001pvq.4">
    <molecule id="Q9BQA5-1"/>
    <property type="organism name" value="human"/>
</dbReference>
<dbReference type="AGR" id="HGNC:17850"/>
<dbReference type="CTD" id="25988"/>
<dbReference type="DisGeNET" id="25988"/>
<dbReference type="GeneCards" id="HINFP"/>
<dbReference type="HGNC" id="HGNC:17850">
    <property type="gene designation" value="HINFP"/>
</dbReference>
<dbReference type="HPA" id="ENSG00000172273">
    <property type="expression patterns" value="Low tissue specificity"/>
</dbReference>
<dbReference type="MIM" id="607099">
    <property type="type" value="gene"/>
</dbReference>
<dbReference type="neXtProt" id="NX_Q9BQA5"/>
<dbReference type="OpenTargets" id="ENSG00000172273"/>
<dbReference type="PharmGKB" id="PA164720597"/>
<dbReference type="VEuPathDB" id="HostDB:ENSG00000172273"/>
<dbReference type="eggNOG" id="KOG3608">
    <property type="taxonomic scope" value="Eukaryota"/>
</dbReference>
<dbReference type="GeneTree" id="ENSGT00870000136508"/>
<dbReference type="HOGENOM" id="CLU_026599_0_0_1"/>
<dbReference type="InParanoid" id="Q9BQA5"/>
<dbReference type="OMA" id="GERNCLW"/>
<dbReference type="OrthoDB" id="10039931at2759"/>
<dbReference type="PAN-GO" id="Q9BQA5">
    <property type="GO annotations" value="4 GO annotations based on evolutionary models"/>
</dbReference>
<dbReference type="PhylomeDB" id="Q9BQA5"/>
<dbReference type="TreeFam" id="TF350923"/>
<dbReference type="PathwayCommons" id="Q9BQA5"/>
<dbReference type="SignaLink" id="Q9BQA5"/>
<dbReference type="BioGRID-ORCS" id="25988">
    <property type="hits" value="825 hits in 1186 CRISPR screens"/>
</dbReference>
<dbReference type="CD-CODE" id="24B72B50">
    <property type="entry name" value="Histone Locus Body"/>
</dbReference>
<dbReference type="ChiTaRS" id="HINFP">
    <property type="organism name" value="human"/>
</dbReference>
<dbReference type="GeneWiki" id="MIZF"/>
<dbReference type="GenomeRNAi" id="25988"/>
<dbReference type="Pharos" id="Q9BQA5">
    <property type="development level" value="Tbio"/>
</dbReference>
<dbReference type="PRO" id="PR:Q9BQA5"/>
<dbReference type="Proteomes" id="UP000005640">
    <property type="component" value="Chromosome 11"/>
</dbReference>
<dbReference type="RNAct" id="Q9BQA5">
    <property type="molecule type" value="protein"/>
</dbReference>
<dbReference type="Bgee" id="ENSG00000172273">
    <property type="expression patterns" value="Expressed in cerebellar hemisphere and 135 other cell types or tissues"/>
</dbReference>
<dbReference type="ExpressionAtlas" id="Q9BQA5">
    <property type="expression patterns" value="baseline and differential"/>
</dbReference>
<dbReference type="GO" id="GO:0015030">
    <property type="term" value="C:Cajal body"/>
    <property type="evidence" value="ECO:0000314"/>
    <property type="project" value="UniProtKB"/>
</dbReference>
<dbReference type="GO" id="GO:0005654">
    <property type="term" value="C:nucleoplasm"/>
    <property type="evidence" value="ECO:0000314"/>
    <property type="project" value="UniProtKB"/>
</dbReference>
<dbReference type="GO" id="GO:0005634">
    <property type="term" value="C:nucleus"/>
    <property type="evidence" value="ECO:0000314"/>
    <property type="project" value="UniProtKB"/>
</dbReference>
<dbReference type="GO" id="GO:0003682">
    <property type="term" value="F:chromatin binding"/>
    <property type="evidence" value="ECO:0007669"/>
    <property type="project" value="Ensembl"/>
</dbReference>
<dbReference type="GO" id="GO:0003677">
    <property type="term" value="F:DNA binding"/>
    <property type="evidence" value="ECO:0000314"/>
    <property type="project" value="UniProtKB"/>
</dbReference>
<dbReference type="GO" id="GO:0001228">
    <property type="term" value="F:DNA-binding transcription activator activity, RNA polymerase II-specific"/>
    <property type="evidence" value="ECO:0000314"/>
    <property type="project" value="GO_Central"/>
</dbReference>
<dbReference type="GO" id="GO:0003700">
    <property type="term" value="F:DNA-binding transcription factor activity"/>
    <property type="evidence" value="ECO:0000315"/>
    <property type="project" value="UniProtKB"/>
</dbReference>
<dbReference type="GO" id="GO:0000981">
    <property type="term" value="F:DNA-binding transcription factor activity, RNA polymerase II-specific"/>
    <property type="evidence" value="ECO:0000318"/>
    <property type="project" value="GO_Central"/>
</dbReference>
<dbReference type="GO" id="GO:0001227">
    <property type="term" value="F:DNA-binding transcription repressor activity, RNA polymerase II-specific"/>
    <property type="evidence" value="ECO:0007669"/>
    <property type="project" value="Ensembl"/>
</dbReference>
<dbReference type="GO" id="GO:0019899">
    <property type="term" value="F:enzyme binding"/>
    <property type="evidence" value="ECO:0000353"/>
    <property type="project" value="UniProtKB"/>
</dbReference>
<dbReference type="GO" id="GO:0042393">
    <property type="term" value="F:histone binding"/>
    <property type="evidence" value="ECO:0000353"/>
    <property type="project" value="UniProtKB"/>
</dbReference>
<dbReference type="GO" id="GO:0000978">
    <property type="term" value="F:RNA polymerase II cis-regulatory region sequence-specific DNA binding"/>
    <property type="evidence" value="ECO:0000318"/>
    <property type="project" value="GO_Central"/>
</dbReference>
<dbReference type="GO" id="GO:0000977">
    <property type="term" value="F:RNA polymerase II transcription regulatory region sequence-specific DNA binding"/>
    <property type="evidence" value="ECO:0000314"/>
    <property type="project" value="ARUK-UCL"/>
</dbReference>
<dbReference type="GO" id="GO:0000976">
    <property type="term" value="F:transcription cis-regulatory region binding"/>
    <property type="evidence" value="ECO:0000314"/>
    <property type="project" value="UniProtKB"/>
</dbReference>
<dbReference type="GO" id="GO:0008270">
    <property type="term" value="F:zinc ion binding"/>
    <property type="evidence" value="ECO:0007669"/>
    <property type="project" value="UniProtKB-KW"/>
</dbReference>
<dbReference type="GO" id="GO:0044843">
    <property type="term" value="P:cell cycle G1/S phase transition"/>
    <property type="evidence" value="ECO:0000315"/>
    <property type="project" value="UniProtKB"/>
</dbReference>
<dbReference type="GO" id="GO:0000077">
    <property type="term" value="P:DNA damage checkpoint signaling"/>
    <property type="evidence" value="ECO:0000315"/>
    <property type="project" value="UniProtKB"/>
</dbReference>
<dbReference type="GO" id="GO:0006281">
    <property type="term" value="P:DNA repair"/>
    <property type="evidence" value="ECO:0000315"/>
    <property type="project" value="UniProtKB"/>
</dbReference>
<dbReference type="GO" id="GO:0006351">
    <property type="term" value="P:DNA-templated transcription"/>
    <property type="evidence" value="ECO:0007669"/>
    <property type="project" value="Ensembl"/>
</dbReference>
<dbReference type="GO" id="GO:0045184">
    <property type="term" value="P:establishment of protein localization"/>
    <property type="evidence" value="ECO:0000315"/>
    <property type="project" value="UniProtKB"/>
</dbReference>
<dbReference type="GO" id="GO:0000082">
    <property type="term" value="P:G1/S transition of mitotic cell cycle"/>
    <property type="evidence" value="ECO:0000315"/>
    <property type="project" value="UniProtKB"/>
</dbReference>
<dbReference type="GO" id="GO:0001701">
    <property type="term" value="P:in utero embryonic development"/>
    <property type="evidence" value="ECO:0000250"/>
    <property type="project" value="UniProtKB"/>
</dbReference>
<dbReference type="GO" id="GO:0045445">
    <property type="term" value="P:myoblast differentiation"/>
    <property type="evidence" value="ECO:0000315"/>
    <property type="project" value="UniProtKB"/>
</dbReference>
<dbReference type="GO" id="GO:0045892">
    <property type="term" value="P:negative regulation of DNA-templated transcription"/>
    <property type="evidence" value="ECO:0000314"/>
    <property type="project" value="UniProtKB"/>
</dbReference>
<dbReference type="GO" id="GO:0010629">
    <property type="term" value="P:negative regulation of gene expression"/>
    <property type="evidence" value="ECO:0000315"/>
    <property type="project" value="UniProtKB"/>
</dbReference>
<dbReference type="GO" id="GO:0045893">
    <property type="term" value="P:positive regulation of DNA-templated transcription"/>
    <property type="evidence" value="ECO:0000314"/>
    <property type="project" value="UniProtKB"/>
</dbReference>
<dbReference type="GO" id="GO:0010628">
    <property type="term" value="P:positive regulation of gene expression"/>
    <property type="evidence" value="ECO:0000315"/>
    <property type="project" value="UniProtKB"/>
</dbReference>
<dbReference type="GO" id="GO:0045944">
    <property type="term" value="P:positive regulation of transcription by RNA polymerase II"/>
    <property type="evidence" value="ECO:0000315"/>
    <property type="project" value="ARUK-UCL"/>
</dbReference>
<dbReference type="GO" id="GO:0006355">
    <property type="term" value="P:regulation of DNA-templated transcription"/>
    <property type="evidence" value="ECO:0000315"/>
    <property type="project" value="UniProtKB"/>
</dbReference>
<dbReference type="GO" id="GO:0006357">
    <property type="term" value="P:regulation of transcription by RNA polymerase II"/>
    <property type="evidence" value="ECO:0000318"/>
    <property type="project" value="GO_Central"/>
</dbReference>
<dbReference type="FunFam" id="3.30.160.60:FF:002166">
    <property type="entry name" value="Histone H4 transcription factor"/>
    <property type="match status" value="1"/>
</dbReference>
<dbReference type="FunFam" id="3.30.160.60:FF:002279">
    <property type="entry name" value="Histone H4 transcription factor"/>
    <property type="match status" value="1"/>
</dbReference>
<dbReference type="Gene3D" id="3.30.160.60">
    <property type="entry name" value="Classic Zinc Finger"/>
    <property type="match status" value="4"/>
</dbReference>
<dbReference type="InterPro" id="IPR036236">
    <property type="entry name" value="Znf_C2H2_sf"/>
</dbReference>
<dbReference type="InterPro" id="IPR013087">
    <property type="entry name" value="Znf_C2H2_type"/>
</dbReference>
<dbReference type="InterPro" id="IPR051574">
    <property type="entry name" value="ZnF_E-box_Homeobox"/>
</dbReference>
<dbReference type="PANTHER" id="PTHR24391:SF26">
    <property type="entry name" value="HISTONE H4 TRANSCRIPTION FACTOR"/>
    <property type="match status" value="1"/>
</dbReference>
<dbReference type="PANTHER" id="PTHR24391">
    <property type="entry name" value="HISTONE H4 TRANSCRIPTION FACTOR-RELATED"/>
    <property type="match status" value="1"/>
</dbReference>
<dbReference type="Pfam" id="PF00096">
    <property type="entry name" value="zf-C2H2"/>
    <property type="match status" value="2"/>
</dbReference>
<dbReference type="Pfam" id="PF13894">
    <property type="entry name" value="zf-C2H2_4"/>
    <property type="match status" value="1"/>
</dbReference>
<dbReference type="SMART" id="SM00355">
    <property type="entry name" value="ZnF_C2H2"/>
    <property type="match status" value="10"/>
</dbReference>
<dbReference type="SUPFAM" id="SSF57667">
    <property type="entry name" value="beta-beta-alpha zinc fingers"/>
    <property type="match status" value="4"/>
</dbReference>
<dbReference type="PROSITE" id="PS00028">
    <property type="entry name" value="ZINC_FINGER_C2H2_1"/>
    <property type="match status" value="7"/>
</dbReference>
<dbReference type="PROSITE" id="PS50157">
    <property type="entry name" value="ZINC_FINGER_C2H2_2"/>
    <property type="match status" value="6"/>
</dbReference>
<organism>
    <name type="scientific">Homo sapiens</name>
    <name type="common">Human</name>
    <dbReference type="NCBI Taxonomy" id="9606"/>
    <lineage>
        <taxon>Eukaryota</taxon>
        <taxon>Metazoa</taxon>
        <taxon>Chordata</taxon>
        <taxon>Craniata</taxon>
        <taxon>Vertebrata</taxon>
        <taxon>Euteleostomi</taxon>
        <taxon>Mammalia</taxon>
        <taxon>Eutheria</taxon>
        <taxon>Euarchontoglires</taxon>
        <taxon>Primates</taxon>
        <taxon>Haplorrhini</taxon>
        <taxon>Catarrhini</taxon>
        <taxon>Hominidae</taxon>
        <taxon>Homo</taxon>
    </lineage>
</organism>
<protein>
    <recommendedName>
        <fullName>Histone H4 transcription factor</fullName>
    </recommendedName>
    <alternativeName>
        <fullName>Histone nuclear factor P</fullName>
        <shortName>HiNF-P</shortName>
    </alternativeName>
    <alternativeName>
        <fullName>MBD2-interacting zinc finger protein</fullName>
    </alternativeName>
    <alternativeName>
        <fullName>Methyl-CpG-binding protein 2-interacting zinc finger protein</fullName>
    </alternativeName>
</protein>
<gene>
    <name type="primary">HINFP</name>
    <name type="synonym">MIZF</name>
    <name type="synonym">ZNF743</name>
</gene>
<name>HINFP_HUMAN</name>
<accession>Q9BQA5</accession>
<accession>B3KPH6</accession>
<accession>B4DWB4</accession>
<accession>E9PQF4</accession>
<accession>Q96E65</accession>
<accession>Q9Y4M7</accession>
<evidence type="ECO:0000255" key="1">
    <source>
        <dbReference type="PROSITE-ProRule" id="PRU00042"/>
    </source>
</evidence>
<evidence type="ECO:0000256" key="2">
    <source>
        <dbReference type="SAM" id="MobiDB-lite"/>
    </source>
</evidence>
<evidence type="ECO:0000269" key="3">
    <source>
    </source>
</evidence>
<evidence type="ECO:0000269" key="4">
    <source>
    </source>
</evidence>
<evidence type="ECO:0000269" key="5">
    <source>
    </source>
</evidence>
<evidence type="ECO:0000269" key="6">
    <source>
    </source>
</evidence>
<evidence type="ECO:0000269" key="7">
    <source>
    </source>
</evidence>
<evidence type="ECO:0000269" key="8">
    <source>
    </source>
</evidence>
<evidence type="ECO:0000269" key="9">
    <source>
    </source>
</evidence>
<evidence type="ECO:0000269" key="10">
    <source>
    </source>
</evidence>
<evidence type="ECO:0000269" key="11">
    <source>
    </source>
</evidence>
<evidence type="ECO:0000303" key="12">
    <source>
    </source>
</evidence>
<evidence type="ECO:0000305" key="13"/>
<sequence>MPPPGKVPRKENLWLQCEWGSCSFVCSTMEKFFEHVTQHLQQHLHGSGEEEEEEEEDDPLEEEFSCLWQECGFCSLDSSADLIRHVYFHCYHTKLKQWGLQALQSQADLGPCILDFQSRNVIPDIPDHFLCLWEHCENSFDNPEWFYRHVEAHSLCCEYEAVGKDNPVVLCGWKGCTCTFKDRSKLREHLRSHTQEKVVACPTCGGMFANNTKFLDHIRRQTSLDQQHFQCSHCSKRFATERLLRDHMRNHVNHYKCPLCDMTCPLPSSLRNHMRFRHSEDRPFKCDCCDYSCKNLIDLQKHLDTHSEEPAYRCDFENCTFSARSLCSIKSHYRKVHEGDSEPRYKCHVCDKCFTRGNNLTVHLRKKHQFKWPSGHPRFRYKEHEDGYMRLQLVRYESVELTQQLLRQPQEGSGLGTSLNESSLQGIILETVPGEPGRKEEEEEGKGSEGTALSASQDNPSSVIHVVNQTNAQGQQEIVYYVLSEAPGEPPPAPEPPSGGIMEKLQGIAEEPEIQMV</sequence>
<proteinExistence type="evidence at protein level"/>
<comment type="function">
    <text evidence="3 4 5 7 8 10 11">Transcriptional repressor that binds to the consensus sequence 5'-CGGACGTT-3' and to the RB1 promoter. Transcriptional activator that promotes histone H4 gene transcription at the G1/S phase transition in conjunction with NPAT. Also activates transcription of the ATM and PRKDC genes. Autoregulates its expression by associating with its own promoter.</text>
</comment>
<comment type="subunit">
    <text evidence="3 7">Binds MBD2 and a histone deacetylase complex. Interacts with NPAT.</text>
</comment>
<comment type="interaction">
    <interactant intactId="EBI-749065">
        <id>Q9BQA5</id>
    </interactant>
    <interactant intactId="EBI-9675802">
        <id>Q6PF18</id>
        <label>MORN3</label>
    </interactant>
    <organismsDiffer>false</organismsDiffer>
    <experiments>3</experiments>
</comment>
<comment type="interaction">
    <interactant intactId="EBI-749065">
        <id>Q9BQA5</id>
    </interactant>
    <interactant intactId="EBI-1246261">
        <id>O14561</id>
        <label>NDUFAB1</label>
    </interactant>
    <organismsDiffer>false</organismsDiffer>
    <experiments>3</experiments>
</comment>
<comment type="subcellular location">
    <subcellularLocation>
        <location evidence="3 4 7 11">Nucleus</location>
    </subcellularLocation>
    <text>Associated with discrete nuclear foci.</text>
</comment>
<comment type="alternative products">
    <event type="alternative splicing"/>
    <isoform>
        <id>Q9BQA5-1</id>
        <name>1</name>
        <sequence type="displayed"/>
    </isoform>
    <isoform>
        <id>Q9BQA5-2</id>
        <name>2</name>
        <sequence type="described" ref="VSP_044719 VSP_044720"/>
    </isoform>
</comment>
<comment type="tissue specificity">
    <text evidence="3">Ubiquitous. Highly expressed in brain, heart, skeletal muscle, spleen, kidney, small intestine, placenta and liver.</text>
</comment>
<comment type="PTM">
    <text evidence="9">Ubiquitinated. Ubiquitination may lead to proteasome-mediated degradation.</text>
</comment>